<name>RL17_BACC0</name>
<proteinExistence type="inferred from homology"/>
<organism>
    <name type="scientific">Bacillus cereus (strain AH820)</name>
    <dbReference type="NCBI Taxonomy" id="405535"/>
    <lineage>
        <taxon>Bacteria</taxon>
        <taxon>Bacillati</taxon>
        <taxon>Bacillota</taxon>
        <taxon>Bacilli</taxon>
        <taxon>Bacillales</taxon>
        <taxon>Bacillaceae</taxon>
        <taxon>Bacillus</taxon>
        <taxon>Bacillus cereus group</taxon>
    </lineage>
</organism>
<feature type="chain" id="PRO_1000144374" description="Large ribosomal subunit protein bL17">
    <location>
        <begin position="1"/>
        <end position="120"/>
    </location>
</feature>
<accession>B7JKE8</accession>
<dbReference type="EMBL" id="CP001283">
    <property type="protein sequence ID" value="ACK89806.1"/>
    <property type="molecule type" value="Genomic_DNA"/>
</dbReference>
<dbReference type="RefSeq" id="WP_000331490.1">
    <property type="nucleotide sequence ID" value="NC_011773.1"/>
</dbReference>
<dbReference type="SMR" id="B7JKE8"/>
<dbReference type="GeneID" id="93010915"/>
<dbReference type="KEGG" id="bcu:BCAH820_0151"/>
<dbReference type="HOGENOM" id="CLU_074407_2_2_9"/>
<dbReference type="Proteomes" id="UP000001363">
    <property type="component" value="Chromosome"/>
</dbReference>
<dbReference type="GO" id="GO:0022625">
    <property type="term" value="C:cytosolic large ribosomal subunit"/>
    <property type="evidence" value="ECO:0007669"/>
    <property type="project" value="TreeGrafter"/>
</dbReference>
<dbReference type="GO" id="GO:0003735">
    <property type="term" value="F:structural constituent of ribosome"/>
    <property type="evidence" value="ECO:0007669"/>
    <property type="project" value="InterPro"/>
</dbReference>
<dbReference type="GO" id="GO:0006412">
    <property type="term" value="P:translation"/>
    <property type="evidence" value="ECO:0007669"/>
    <property type="project" value="UniProtKB-UniRule"/>
</dbReference>
<dbReference type="FunFam" id="3.90.1030.10:FF:000002">
    <property type="entry name" value="50S ribosomal protein L17"/>
    <property type="match status" value="1"/>
</dbReference>
<dbReference type="Gene3D" id="3.90.1030.10">
    <property type="entry name" value="Ribosomal protein L17"/>
    <property type="match status" value="1"/>
</dbReference>
<dbReference type="HAMAP" id="MF_01368">
    <property type="entry name" value="Ribosomal_bL17"/>
    <property type="match status" value="1"/>
</dbReference>
<dbReference type="InterPro" id="IPR000456">
    <property type="entry name" value="Ribosomal_bL17"/>
</dbReference>
<dbReference type="InterPro" id="IPR047859">
    <property type="entry name" value="Ribosomal_bL17_CS"/>
</dbReference>
<dbReference type="InterPro" id="IPR036373">
    <property type="entry name" value="Ribosomal_bL17_sf"/>
</dbReference>
<dbReference type="NCBIfam" id="TIGR00059">
    <property type="entry name" value="L17"/>
    <property type="match status" value="1"/>
</dbReference>
<dbReference type="PANTHER" id="PTHR14413:SF16">
    <property type="entry name" value="LARGE RIBOSOMAL SUBUNIT PROTEIN BL17M"/>
    <property type="match status" value="1"/>
</dbReference>
<dbReference type="PANTHER" id="PTHR14413">
    <property type="entry name" value="RIBOSOMAL PROTEIN L17"/>
    <property type="match status" value="1"/>
</dbReference>
<dbReference type="Pfam" id="PF01196">
    <property type="entry name" value="Ribosomal_L17"/>
    <property type="match status" value="1"/>
</dbReference>
<dbReference type="SUPFAM" id="SSF64263">
    <property type="entry name" value="Prokaryotic ribosomal protein L17"/>
    <property type="match status" value="1"/>
</dbReference>
<dbReference type="PROSITE" id="PS01167">
    <property type="entry name" value="RIBOSOMAL_L17"/>
    <property type="match status" value="1"/>
</dbReference>
<sequence length="120" mass="13450">MAYRKLGRTSAQRKAMLRDLATDLIINERIQTTETRAKELRSVVEKMITLGKRGDLHARRQAAAFIRNEVANAETGQDALQKLFADVAPRYAERQGGYTRIAKIGPRRGDAAPMVIIELV</sequence>
<comment type="subunit">
    <text evidence="1">Part of the 50S ribosomal subunit. Contacts protein L32.</text>
</comment>
<comment type="similarity">
    <text evidence="1">Belongs to the bacterial ribosomal protein bL17 family.</text>
</comment>
<evidence type="ECO:0000255" key="1">
    <source>
        <dbReference type="HAMAP-Rule" id="MF_01368"/>
    </source>
</evidence>
<evidence type="ECO:0000305" key="2"/>
<gene>
    <name evidence="1" type="primary">rplQ</name>
    <name type="ordered locus">BCAH820_0151</name>
</gene>
<keyword id="KW-0687">Ribonucleoprotein</keyword>
<keyword id="KW-0689">Ribosomal protein</keyword>
<protein>
    <recommendedName>
        <fullName evidence="1">Large ribosomal subunit protein bL17</fullName>
    </recommendedName>
    <alternativeName>
        <fullName evidence="2">50S ribosomal protein L17</fullName>
    </alternativeName>
</protein>
<reference key="1">
    <citation type="submission" date="2008-10" db="EMBL/GenBank/DDBJ databases">
        <title>Genome sequence of Bacillus cereus AH820.</title>
        <authorList>
            <person name="Dodson R.J."/>
            <person name="Durkin A.S."/>
            <person name="Rosovitz M.J."/>
            <person name="Rasko D.A."/>
            <person name="Hoffmaster A."/>
            <person name="Ravel J."/>
            <person name="Sutton G."/>
        </authorList>
    </citation>
    <scope>NUCLEOTIDE SEQUENCE [LARGE SCALE GENOMIC DNA]</scope>
    <source>
        <strain>AH820</strain>
    </source>
</reference>